<proteinExistence type="evidence at transcript level"/>
<protein>
    <recommendedName>
        <fullName>Myeloid differentiation primary response protein MyD88-A</fullName>
    </recommendedName>
    <alternativeName>
        <fullName>Toll/IL-1 receptor binding protein MyD88-A</fullName>
    </alternativeName>
</protein>
<dbReference type="EMBL" id="AF294272">
    <property type="protein sequence ID" value="AAG10073.1"/>
    <property type="molecule type" value="mRNA"/>
</dbReference>
<dbReference type="EMBL" id="BC084238">
    <property type="protein sequence ID" value="AAH84238.1"/>
    <property type="molecule type" value="mRNA"/>
</dbReference>
<dbReference type="RefSeq" id="NP_001081001.1">
    <property type="nucleotide sequence ID" value="NM_001087532.1"/>
</dbReference>
<dbReference type="SMR" id="Q9DF60"/>
<dbReference type="BioGRID" id="98923">
    <property type="interactions" value="1"/>
</dbReference>
<dbReference type="DNASU" id="394321"/>
<dbReference type="GeneID" id="394321"/>
<dbReference type="KEGG" id="xla:394321"/>
<dbReference type="AGR" id="Xenbase:XB-GENE-865632"/>
<dbReference type="CTD" id="394321"/>
<dbReference type="Xenbase" id="XB-GENE-865632">
    <property type="gene designation" value="myd88.L"/>
</dbReference>
<dbReference type="OMA" id="SNECDFQ"/>
<dbReference type="OrthoDB" id="10037120at2759"/>
<dbReference type="Proteomes" id="UP000186698">
    <property type="component" value="Chromosome 6L"/>
</dbReference>
<dbReference type="Bgee" id="394321">
    <property type="expression patterns" value="Expressed in blastula and 19 other cell types or tissues"/>
</dbReference>
<dbReference type="GO" id="GO:0005737">
    <property type="term" value="C:cytoplasm"/>
    <property type="evidence" value="ECO:0007669"/>
    <property type="project" value="UniProtKB-SubCell"/>
</dbReference>
<dbReference type="GO" id="GO:0005886">
    <property type="term" value="C:plasma membrane"/>
    <property type="evidence" value="ECO:0000318"/>
    <property type="project" value="GO_Central"/>
</dbReference>
<dbReference type="GO" id="GO:0070976">
    <property type="term" value="F:TIR domain binding"/>
    <property type="evidence" value="ECO:0007669"/>
    <property type="project" value="InterPro"/>
</dbReference>
<dbReference type="GO" id="GO:0035325">
    <property type="term" value="F:Toll-like receptor binding"/>
    <property type="evidence" value="ECO:0000318"/>
    <property type="project" value="GO_Central"/>
</dbReference>
<dbReference type="GO" id="GO:0050830">
    <property type="term" value="P:defense response to Gram-positive bacterium"/>
    <property type="evidence" value="ECO:0000318"/>
    <property type="project" value="GO_Central"/>
</dbReference>
<dbReference type="GO" id="GO:0006954">
    <property type="term" value="P:inflammatory response"/>
    <property type="evidence" value="ECO:0007669"/>
    <property type="project" value="UniProtKB-KW"/>
</dbReference>
<dbReference type="GO" id="GO:0045087">
    <property type="term" value="P:innate immune response"/>
    <property type="evidence" value="ECO:0000318"/>
    <property type="project" value="GO_Central"/>
</dbReference>
<dbReference type="GO" id="GO:0002755">
    <property type="term" value="P:MyD88-dependent toll-like receptor signaling pathway"/>
    <property type="evidence" value="ECO:0007669"/>
    <property type="project" value="InterPro"/>
</dbReference>
<dbReference type="GO" id="GO:0043123">
    <property type="term" value="P:positive regulation of canonical NF-kappaB signal transduction"/>
    <property type="evidence" value="ECO:0007669"/>
    <property type="project" value="InterPro"/>
</dbReference>
<dbReference type="GO" id="GO:0008063">
    <property type="term" value="P:Toll signaling pathway"/>
    <property type="evidence" value="ECO:0000318"/>
    <property type="project" value="GO_Central"/>
</dbReference>
<dbReference type="GO" id="GO:0034142">
    <property type="term" value="P:toll-like receptor 4 signaling pathway"/>
    <property type="evidence" value="ECO:0000318"/>
    <property type="project" value="GO_Central"/>
</dbReference>
<dbReference type="CDD" id="cd08312">
    <property type="entry name" value="Death_MyD88"/>
    <property type="match status" value="1"/>
</dbReference>
<dbReference type="FunFam" id="1.10.533.10:FF:000029">
    <property type="entry name" value="Myeloid differentiation primary response protein MyD88"/>
    <property type="match status" value="1"/>
</dbReference>
<dbReference type="FunFam" id="3.40.50.10140:FF:000005">
    <property type="entry name" value="Myeloid differentiation primary response protein MyD88"/>
    <property type="match status" value="1"/>
</dbReference>
<dbReference type="Gene3D" id="1.10.533.10">
    <property type="entry name" value="Death Domain, Fas"/>
    <property type="match status" value="1"/>
</dbReference>
<dbReference type="Gene3D" id="3.40.50.10140">
    <property type="entry name" value="Toll/interleukin-1 receptor homology (TIR) domain"/>
    <property type="match status" value="1"/>
</dbReference>
<dbReference type="InterPro" id="IPR011029">
    <property type="entry name" value="DEATH-like_dom_sf"/>
</dbReference>
<dbReference type="InterPro" id="IPR000488">
    <property type="entry name" value="Death_dom"/>
</dbReference>
<dbReference type="InterPro" id="IPR034249">
    <property type="entry name" value="MyD88_Death"/>
</dbReference>
<dbReference type="InterPro" id="IPR017281">
    <property type="entry name" value="Myelin_different_resp_MyD88"/>
</dbReference>
<dbReference type="InterPro" id="IPR000157">
    <property type="entry name" value="TIR_dom"/>
</dbReference>
<dbReference type="InterPro" id="IPR035897">
    <property type="entry name" value="Toll_tir_struct_dom_sf"/>
</dbReference>
<dbReference type="PANTHER" id="PTHR15079">
    <property type="entry name" value="MYD88"/>
    <property type="match status" value="1"/>
</dbReference>
<dbReference type="PANTHER" id="PTHR15079:SF3">
    <property type="entry name" value="MYELOID DIFFERENTIATION PRIMARY RESPONSE PROTEIN MYD88"/>
    <property type="match status" value="1"/>
</dbReference>
<dbReference type="Pfam" id="PF00531">
    <property type="entry name" value="Death"/>
    <property type="match status" value="1"/>
</dbReference>
<dbReference type="Pfam" id="PF13676">
    <property type="entry name" value="TIR_2"/>
    <property type="match status" value="1"/>
</dbReference>
<dbReference type="PIRSF" id="PIRSF037756">
    <property type="entry name" value="MyD88"/>
    <property type="match status" value="1"/>
</dbReference>
<dbReference type="SMART" id="SM00005">
    <property type="entry name" value="DEATH"/>
    <property type="match status" value="1"/>
</dbReference>
<dbReference type="SMART" id="SM00255">
    <property type="entry name" value="TIR"/>
    <property type="match status" value="1"/>
</dbReference>
<dbReference type="SUPFAM" id="SSF47986">
    <property type="entry name" value="DEATH domain"/>
    <property type="match status" value="1"/>
</dbReference>
<dbReference type="SUPFAM" id="SSF52200">
    <property type="entry name" value="Toll/Interleukin receptor TIR domain"/>
    <property type="match status" value="1"/>
</dbReference>
<dbReference type="PROSITE" id="PS50017">
    <property type="entry name" value="DEATH_DOMAIN"/>
    <property type="match status" value="1"/>
</dbReference>
<dbReference type="PROSITE" id="PS50104">
    <property type="entry name" value="TIR"/>
    <property type="match status" value="1"/>
</dbReference>
<keyword id="KW-0963">Cytoplasm</keyword>
<keyword id="KW-0391">Immunity</keyword>
<keyword id="KW-0395">Inflammatory response</keyword>
<keyword id="KW-0399">Innate immunity</keyword>
<keyword id="KW-1185">Reference proteome</keyword>
<evidence type="ECO:0000250" key="1"/>
<evidence type="ECO:0000255" key="2">
    <source>
        <dbReference type="PROSITE-ProRule" id="PRU00064"/>
    </source>
</evidence>
<evidence type="ECO:0000255" key="3">
    <source>
        <dbReference type="PROSITE-ProRule" id="PRU00204"/>
    </source>
</evidence>
<evidence type="ECO:0000269" key="4">
    <source>
    </source>
</evidence>
<comment type="function">
    <text evidence="1 4">Adapter protein involved in the Toll-like receptor and IL-1 receptor signaling pathway in the innate immune response (By similarity). Activates expression of target genes in the Spemann organizer region during early embryonic development. Is required for normal axis formation.</text>
</comment>
<comment type="subcellular location">
    <subcellularLocation>
        <location evidence="1">Cytoplasm</location>
    </subcellularLocation>
</comment>
<comment type="domain">
    <text evidence="1">The intermediate domain (ID) is required for the phosphorylation and activation of IRAK.</text>
</comment>
<name>MY88A_XENLA</name>
<reference key="1">
    <citation type="journal article" date="2000" name="Mech. Dev.">
        <title>The Toll/IL-1 receptor binding protein MyD88 is required for Xenopus axis formation.</title>
        <authorList>
            <person name="Prothmann C."/>
            <person name="Armstrong N.J."/>
            <person name="Rupp R.A."/>
        </authorList>
    </citation>
    <scope>NUCLEOTIDE SEQUENCE [MRNA]</scope>
    <scope>FUNCTION</scope>
</reference>
<reference key="2">
    <citation type="submission" date="2004-10" db="EMBL/GenBank/DDBJ databases">
        <authorList>
            <consortium name="NIH - Xenopus Gene Collection (XGC) project"/>
        </authorList>
    </citation>
    <scope>NUCLEOTIDE SEQUENCE [LARGE SCALE MRNA]</scope>
    <source>
        <tissue>Embryo</tissue>
    </source>
</reference>
<sequence>MACGSSLDSIDMNSIPLVALNYTVRHRLCLYLNPDAVVAADWTRLAEEMGYDYLEIRNFQRYPDSTMKLLEDWEKKCFRATVGGLLEMLKKMERNDILTDLGPLIEADCMKYLEKKHVPLPIQDDKVDSSEQYRITKSDDPYGSMPETFDAFICYCAQDISFVQEMISRLEQTDYKLKLCVFDRDVLPGTCLWSITSELIENRCRKMVVIISDDYLDSSDCDFQTKFALSLGPGAREKRLIPVKYKPMKRPFPSILRFITVCDYTNPYTKAWFWDKLAKALAR</sequence>
<accession>Q9DF60</accession>
<organism>
    <name type="scientific">Xenopus laevis</name>
    <name type="common">African clawed frog</name>
    <dbReference type="NCBI Taxonomy" id="8355"/>
    <lineage>
        <taxon>Eukaryota</taxon>
        <taxon>Metazoa</taxon>
        <taxon>Chordata</taxon>
        <taxon>Craniata</taxon>
        <taxon>Vertebrata</taxon>
        <taxon>Euteleostomi</taxon>
        <taxon>Amphibia</taxon>
        <taxon>Batrachia</taxon>
        <taxon>Anura</taxon>
        <taxon>Pipoidea</taxon>
        <taxon>Pipidae</taxon>
        <taxon>Xenopodinae</taxon>
        <taxon>Xenopus</taxon>
        <taxon>Xenopus</taxon>
    </lineage>
</organism>
<feature type="chain" id="PRO_0000393145" description="Myeloid differentiation primary response protein MyD88-A">
    <location>
        <begin position="1"/>
        <end position="283"/>
    </location>
</feature>
<feature type="domain" description="Death" evidence="2">
    <location>
        <begin position="27"/>
        <end position="105"/>
    </location>
</feature>
<feature type="domain" description="TIR" evidence="3">
    <location>
        <begin position="147"/>
        <end position="281"/>
    </location>
</feature>
<feature type="region of interest" description="Intermediate domain" evidence="1">
    <location>
        <begin position="106"/>
        <end position="143"/>
    </location>
</feature>
<gene>
    <name type="primary">myd88-a</name>
</gene>